<keyword id="KW-0150">Chloroplast</keyword>
<keyword id="KW-0472">Membrane</keyword>
<keyword id="KW-0602">Photosynthesis</keyword>
<keyword id="KW-0604">Photosystem II</keyword>
<keyword id="KW-0934">Plastid</keyword>
<keyword id="KW-0674">Reaction center</keyword>
<keyword id="KW-1185">Reference proteome</keyword>
<keyword id="KW-0793">Thylakoid</keyword>
<keyword id="KW-0812">Transmembrane</keyword>
<keyword id="KW-1133">Transmembrane helix</keyword>
<comment type="function">
    <text evidence="1">One of the components of the core complex of photosystem II (PSII). PSII is a light-driven water:plastoquinone oxidoreductase that uses light energy to abstract electrons from H(2)O, generating O(2) and a proton gradient subsequently used for ATP formation. It consists of a core antenna complex that captures photons, and an electron transfer chain that converts photonic excitation into a charge separation. This subunit is found at the monomer-monomer interface.</text>
</comment>
<comment type="subunit">
    <text evidence="1">PSII is composed of 1 copy each of membrane proteins PsbA, PsbB, PsbC, PsbD, PsbE, PsbF, PsbH, PsbI, PsbJ, PsbK, PsbL, PsbM, PsbT, PsbX, PsbY, PsbZ, Psb30/Ycf12, at least 3 peripheral proteins of the oxygen-evolving complex and a large number of cofactors. It forms dimeric complexes.</text>
</comment>
<comment type="subcellular location">
    <subcellularLocation>
        <location evidence="1">Plastid</location>
        <location evidence="1">Chloroplast thylakoid membrane</location>
        <topology evidence="1">Single-pass membrane protein</topology>
    </subcellularLocation>
</comment>
<comment type="similarity">
    <text evidence="1">Belongs to the PsbM family.</text>
</comment>
<geneLocation type="chloroplast"/>
<evidence type="ECO:0000255" key="1">
    <source>
        <dbReference type="HAMAP-Rule" id="MF_00438"/>
    </source>
</evidence>
<name>PSBM_GOSHI</name>
<organism>
    <name type="scientific">Gossypium hirsutum</name>
    <name type="common">Upland cotton</name>
    <name type="synonym">Gossypium mexicanum</name>
    <dbReference type="NCBI Taxonomy" id="3635"/>
    <lineage>
        <taxon>Eukaryota</taxon>
        <taxon>Viridiplantae</taxon>
        <taxon>Streptophyta</taxon>
        <taxon>Embryophyta</taxon>
        <taxon>Tracheophyta</taxon>
        <taxon>Spermatophyta</taxon>
        <taxon>Magnoliopsida</taxon>
        <taxon>eudicotyledons</taxon>
        <taxon>Gunneridae</taxon>
        <taxon>Pentapetalae</taxon>
        <taxon>rosids</taxon>
        <taxon>malvids</taxon>
        <taxon>Malvales</taxon>
        <taxon>Malvaceae</taxon>
        <taxon>Malvoideae</taxon>
        <taxon>Gossypium</taxon>
    </lineage>
</organism>
<dbReference type="EMBL" id="DQ345959">
    <property type="protein sequence ID" value="ABC73622.1"/>
    <property type="molecule type" value="Genomic_DNA"/>
</dbReference>
<dbReference type="RefSeq" id="YP_538929.1">
    <property type="nucleotide sequence ID" value="NC_007944.1"/>
</dbReference>
<dbReference type="SMR" id="Q2L8Z8"/>
<dbReference type="GeneID" id="3989200"/>
<dbReference type="KEGG" id="ghi:3989200"/>
<dbReference type="OrthoDB" id="52999at41938"/>
<dbReference type="Proteomes" id="UP000189702">
    <property type="component" value="Chloroplast Pltd"/>
</dbReference>
<dbReference type="GO" id="GO:0009535">
    <property type="term" value="C:chloroplast thylakoid membrane"/>
    <property type="evidence" value="ECO:0007669"/>
    <property type="project" value="UniProtKB-SubCell"/>
</dbReference>
<dbReference type="GO" id="GO:0009523">
    <property type="term" value="C:photosystem II"/>
    <property type="evidence" value="ECO:0007669"/>
    <property type="project" value="UniProtKB-KW"/>
</dbReference>
<dbReference type="GO" id="GO:0019684">
    <property type="term" value="P:photosynthesis, light reaction"/>
    <property type="evidence" value="ECO:0007669"/>
    <property type="project" value="InterPro"/>
</dbReference>
<dbReference type="HAMAP" id="MF_00438">
    <property type="entry name" value="PSII_PsbM"/>
    <property type="match status" value="1"/>
</dbReference>
<dbReference type="InterPro" id="IPR007826">
    <property type="entry name" value="PSII_PsbM"/>
</dbReference>
<dbReference type="InterPro" id="IPR037269">
    <property type="entry name" value="PSII_PsbM_sf"/>
</dbReference>
<dbReference type="NCBIfam" id="TIGR03038">
    <property type="entry name" value="PS_II_psbM"/>
    <property type="match status" value="1"/>
</dbReference>
<dbReference type="PANTHER" id="PTHR35774">
    <property type="entry name" value="PHOTOSYSTEM II REACTION CENTER PROTEIN M"/>
    <property type="match status" value="1"/>
</dbReference>
<dbReference type="PANTHER" id="PTHR35774:SF1">
    <property type="entry name" value="PHOTOSYSTEM II REACTION CENTER PROTEIN M"/>
    <property type="match status" value="1"/>
</dbReference>
<dbReference type="Pfam" id="PF05151">
    <property type="entry name" value="PsbM"/>
    <property type="match status" value="1"/>
</dbReference>
<dbReference type="SUPFAM" id="SSF161033">
    <property type="entry name" value="Photosystem II reaction center protein M, PsbM"/>
    <property type="match status" value="1"/>
</dbReference>
<gene>
    <name evidence="1" type="primary">psbM</name>
</gene>
<feature type="chain" id="PRO_0000276241" description="Photosystem II reaction center protein M">
    <location>
        <begin position="1"/>
        <end position="34"/>
    </location>
</feature>
<feature type="transmembrane region" description="Helical" evidence="1">
    <location>
        <begin position="5"/>
        <end position="25"/>
    </location>
</feature>
<reference key="1">
    <citation type="journal article" date="2006" name="BMC Genomics">
        <title>The complete chloroplast genome sequence of Gossypium hirsutum: organization and phylogenetic relationships to other angiosperms.</title>
        <authorList>
            <person name="Lee S.-B."/>
            <person name="Kaittanis C."/>
            <person name="Jansen R.K."/>
            <person name="Hostetler J.B."/>
            <person name="Tallon L.J."/>
            <person name="Town C.D."/>
            <person name="Daniell H."/>
        </authorList>
    </citation>
    <scope>NUCLEOTIDE SEQUENCE [LARGE SCALE GENOMIC DNA]</scope>
    <source>
        <strain>cv. Coker 310FR</strain>
    </source>
</reference>
<protein>
    <recommendedName>
        <fullName evidence="1">Photosystem II reaction center protein M</fullName>
        <shortName evidence="1">PSII-M</shortName>
    </recommendedName>
</protein>
<proteinExistence type="inferred from homology"/>
<sequence>MEVNILAFIATALFILVPTAFLLIIYVKTVSQSD</sequence>
<accession>Q2L8Z8</accession>